<feature type="chain" id="PRO_1000007067" description="Large ribosomal subunit protein bL12">
    <location>
        <begin position="1"/>
        <end position="121"/>
    </location>
</feature>
<name>RL7_PSYIN</name>
<reference key="1">
    <citation type="journal article" date="2008" name="BMC Genomics">
        <title>Genomics of an extreme psychrophile, Psychromonas ingrahamii.</title>
        <authorList>
            <person name="Riley M."/>
            <person name="Staley J.T."/>
            <person name="Danchin A."/>
            <person name="Wang T.Z."/>
            <person name="Brettin T.S."/>
            <person name="Hauser L.J."/>
            <person name="Land M.L."/>
            <person name="Thompson L.S."/>
        </authorList>
    </citation>
    <scope>NUCLEOTIDE SEQUENCE [LARGE SCALE GENOMIC DNA]</scope>
    <source>
        <strain>DSM 17664 / CCUG 51855 / 37</strain>
    </source>
</reference>
<gene>
    <name evidence="1" type="primary">rplL</name>
    <name type="ordered locus">Ping_3447</name>
</gene>
<proteinExistence type="inferred from homology"/>
<organism>
    <name type="scientific">Psychromonas ingrahamii (strain DSM 17664 / CCUG 51855 / 37)</name>
    <dbReference type="NCBI Taxonomy" id="357804"/>
    <lineage>
        <taxon>Bacteria</taxon>
        <taxon>Pseudomonadati</taxon>
        <taxon>Pseudomonadota</taxon>
        <taxon>Gammaproteobacteria</taxon>
        <taxon>Alteromonadales</taxon>
        <taxon>Psychromonadaceae</taxon>
        <taxon>Psychromonas</taxon>
    </lineage>
</organism>
<accession>A1T066</accession>
<keyword id="KW-1185">Reference proteome</keyword>
<keyword id="KW-0687">Ribonucleoprotein</keyword>
<keyword id="KW-0689">Ribosomal protein</keyword>
<evidence type="ECO:0000255" key="1">
    <source>
        <dbReference type="HAMAP-Rule" id="MF_00368"/>
    </source>
</evidence>
<evidence type="ECO:0000305" key="2"/>
<protein>
    <recommendedName>
        <fullName evidence="1">Large ribosomal subunit protein bL12</fullName>
    </recommendedName>
    <alternativeName>
        <fullName evidence="2">50S ribosomal protein L7/L12</fullName>
    </alternativeName>
</protein>
<sequence length="121" mass="12520">MSITKDQIIDAVAELSVMEVVELITAMEEKFGVSAAAAVAGAAGPAEVVEEQTEFDVIMTTFGENKVKAIKAVRAATGLGLKEAKDAVESCPVAIKEGISKADAEALKAVLEEIGATVELK</sequence>
<comment type="function">
    <text evidence="1">Forms part of the ribosomal stalk which helps the ribosome interact with GTP-bound translation factors. Is thus essential for accurate translation.</text>
</comment>
<comment type="subunit">
    <text evidence="1">Homodimer. Part of the ribosomal stalk of the 50S ribosomal subunit. Forms a multimeric L10(L12)X complex, where L10 forms an elongated spine to which 2 to 4 L12 dimers bind in a sequential fashion. Binds GTP-bound translation factors.</text>
</comment>
<comment type="similarity">
    <text evidence="1">Belongs to the bacterial ribosomal protein bL12 family.</text>
</comment>
<dbReference type="EMBL" id="CP000510">
    <property type="protein sequence ID" value="ABM05131.1"/>
    <property type="molecule type" value="Genomic_DNA"/>
</dbReference>
<dbReference type="RefSeq" id="WP_011771683.1">
    <property type="nucleotide sequence ID" value="NC_008709.1"/>
</dbReference>
<dbReference type="SMR" id="A1T066"/>
<dbReference type="STRING" id="357804.Ping_3447"/>
<dbReference type="KEGG" id="pin:Ping_3447"/>
<dbReference type="eggNOG" id="COG0222">
    <property type="taxonomic scope" value="Bacteria"/>
</dbReference>
<dbReference type="HOGENOM" id="CLU_086499_3_2_6"/>
<dbReference type="OrthoDB" id="9811748at2"/>
<dbReference type="Proteomes" id="UP000000639">
    <property type="component" value="Chromosome"/>
</dbReference>
<dbReference type="GO" id="GO:0022625">
    <property type="term" value="C:cytosolic large ribosomal subunit"/>
    <property type="evidence" value="ECO:0007669"/>
    <property type="project" value="TreeGrafter"/>
</dbReference>
<dbReference type="GO" id="GO:0003729">
    <property type="term" value="F:mRNA binding"/>
    <property type="evidence" value="ECO:0007669"/>
    <property type="project" value="TreeGrafter"/>
</dbReference>
<dbReference type="GO" id="GO:0003735">
    <property type="term" value="F:structural constituent of ribosome"/>
    <property type="evidence" value="ECO:0007669"/>
    <property type="project" value="InterPro"/>
</dbReference>
<dbReference type="GO" id="GO:0006412">
    <property type="term" value="P:translation"/>
    <property type="evidence" value="ECO:0007669"/>
    <property type="project" value="UniProtKB-UniRule"/>
</dbReference>
<dbReference type="CDD" id="cd00387">
    <property type="entry name" value="Ribosomal_L7_L12"/>
    <property type="match status" value="1"/>
</dbReference>
<dbReference type="FunFam" id="1.20.5.710:FF:000001">
    <property type="entry name" value="50S ribosomal protein L7/L12"/>
    <property type="match status" value="1"/>
</dbReference>
<dbReference type="FunFam" id="3.30.1390.10:FF:000001">
    <property type="entry name" value="50S ribosomal protein L7/L12"/>
    <property type="match status" value="1"/>
</dbReference>
<dbReference type="Gene3D" id="3.30.1390.10">
    <property type="match status" value="1"/>
</dbReference>
<dbReference type="Gene3D" id="1.20.5.710">
    <property type="entry name" value="Single helix bin"/>
    <property type="match status" value="1"/>
</dbReference>
<dbReference type="HAMAP" id="MF_00368">
    <property type="entry name" value="Ribosomal_bL12"/>
    <property type="match status" value="1"/>
</dbReference>
<dbReference type="InterPro" id="IPR000206">
    <property type="entry name" value="Ribosomal_bL12"/>
</dbReference>
<dbReference type="InterPro" id="IPR013823">
    <property type="entry name" value="Ribosomal_bL12_C"/>
</dbReference>
<dbReference type="InterPro" id="IPR014719">
    <property type="entry name" value="Ribosomal_bL12_C/ClpS-like"/>
</dbReference>
<dbReference type="InterPro" id="IPR008932">
    <property type="entry name" value="Ribosomal_bL12_oligo"/>
</dbReference>
<dbReference type="InterPro" id="IPR036235">
    <property type="entry name" value="Ribosomal_bL12_oligo_N_sf"/>
</dbReference>
<dbReference type="NCBIfam" id="TIGR00855">
    <property type="entry name" value="L12"/>
    <property type="match status" value="1"/>
</dbReference>
<dbReference type="PANTHER" id="PTHR45987">
    <property type="entry name" value="39S RIBOSOMAL PROTEIN L12"/>
    <property type="match status" value="1"/>
</dbReference>
<dbReference type="PANTHER" id="PTHR45987:SF4">
    <property type="entry name" value="LARGE RIBOSOMAL SUBUNIT PROTEIN BL12M"/>
    <property type="match status" value="1"/>
</dbReference>
<dbReference type="Pfam" id="PF00542">
    <property type="entry name" value="Ribosomal_L12"/>
    <property type="match status" value="1"/>
</dbReference>
<dbReference type="Pfam" id="PF16320">
    <property type="entry name" value="Ribosomal_L12_N"/>
    <property type="match status" value="1"/>
</dbReference>
<dbReference type="SUPFAM" id="SSF54736">
    <property type="entry name" value="ClpS-like"/>
    <property type="match status" value="1"/>
</dbReference>
<dbReference type="SUPFAM" id="SSF48300">
    <property type="entry name" value="Ribosomal protein L7/12, oligomerisation (N-terminal) domain"/>
    <property type="match status" value="1"/>
</dbReference>